<dbReference type="EMBL" id="BC081158">
    <property type="protein sequence ID" value="AAH81158.1"/>
    <property type="molecule type" value="mRNA"/>
</dbReference>
<dbReference type="RefSeq" id="NP_001087739.1">
    <property type="nucleotide sequence ID" value="NM_001094270.1"/>
</dbReference>
<dbReference type="SMR" id="Q66IW8"/>
<dbReference type="DNASU" id="447563"/>
<dbReference type="GeneID" id="447563"/>
<dbReference type="KEGG" id="xla:447563"/>
<dbReference type="AGR" id="Xenbase:XB-GENE-964413"/>
<dbReference type="CTD" id="447563"/>
<dbReference type="Xenbase" id="XB-GENE-964413">
    <property type="gene designation" value="brf2.S"/>
</dbReference>
<dbReference type="OrthoDB" id="2121711at2759"/>
<dbReference type="Proteomes" id="UP000186698">
    <property type="component" value="Chromosome 3S"/>
</dbReference>
<dbReference type="Bgee" id="447563">
    <property type="expression patterns" value="Expressed in egg cell and 19 other cell types or tissues"/>
</dbReference>
<dbReference type="GO" id="GO:0005634">
    <property type="term" value="C:nucleus"/>
    <property type="evidence" value="ECO:0000318"/>
    <property type="project" value="GO_Central"/>
</dbReference>
<dbReference type="GO" id="GO:0000126">
    <property type="term" value="C:transcription factor TFIIIB complex"/>
    <property type="evidence" value="ECO:0000250"/>
    <property type="project" value="UniProtKB"/>
</dbReference>
<dbReference type="GO" id="GO:0097550">
    <property type="term" value="C:transcription preinitiation complex"/>
    <property type="evidence" value="ECO:0000318"/>
    <property type="project" value="GO_Central"/>
</dbReference>
<dbReference type="GO" id="GO:0016251">
    <property type="term" value="F:RNA polymerase II general transcription initiation factor activity"/>
    <property type="evidence" value="ECO:0000318"/>
    <property type="project" value="GO_Central"/>
</dbReference>
<dbReference type="GO" id="GO:0001006">
    <property type="term" value="F:RNA polymerase III type 3 promoter sequence-specific DNA binding"/>
    <property type="evidence" value="ECO:0000250"/>
    <property type="project" value="UniProtKB"/>
</dbReference>
<dbReference type="GO" id="GO:0017025">
    <property type="term" value="F:TBP-class protein binding"/>
    <property type="evidence" value="ECO:0000318"/>
    <property type="project" value="GO_Central"/>
</dbReference>
<dbReference type="GO" id="GO:0008270">
    <property type="term" value="F:zinc ion binding"/>
    <property type="evidence" value="ECO:0007669"/>
    <property type="project" value="UniProtKB-KW"/>
</dbReference>
<dbReference type="GO" id="GO:0034599">
    <property type="term" value="P:cellular response to oxidative stress"/>
    <property type="evidence" value="ECO:0000250"/>
    <property type="project" value="UniProtKB"/>
</dbReference>
<dbReference type="GO" id="GO:0006359">
    <property type="term" value="P:regulation of transcription by RNA polymerase III"/>
    <property type="evidence" value="ECO:0000250"/>
    <property type="project" value="UniProtKB"/>
</dbReference>
<dbReference type="GO" id="GO:0070897">
    <property type="term" value="P:transcription preinitiation complex assembly"/>
    <property type="evidence" value="ECO:0007669"/>
    <property type="project" value="InterPro"/>
</dbReference>
<dbReference type="CDD" id="cd20555">
    <property type="entry name" value="CYCLIN_BRF2"/>
    <property type="match status" value="1"/>
</dbReference>
<dbReference type="FunFam" id="1.10.472.10:FF:000046">
    <property type="entry name" value="Transcription factor IIIB 50 kDa subunit"/>
    <property type="match status" value="1"/>
</dbReference>
<dbReference type="FunFam" id="2.20.25.10:FF:000014">
    <property type="entry name" value="Transcription factor IIIB 50 kDa subunit"/>
    <property type="match status" value="1"/>
</dbReference>
<dbReference type="Gene3D" id="2.20.25.10">
    <property type="match status" value="1"/>
</dbReference>
<dbReference type="Gene3D" id="1.10.472.10">
    <property type="entry name" value="Cyclin-like"/>
    <property type="match status" value="2"/>
</dbReference>
<dbReference type="InterPro" id="IPR054078">
    <property type="entry name" value="BRF2-like_C"/>
</dbReference>
<dbReference type="InterPro" id="IPR036915">
    <property type="entry name" value="Cyclin-like_sf"/>
</dbReference>
<dbReference type="InterPro" id="IPR000812">
    <property type="entry name" value="TFIIB"/>
</dbReference>
<dbReference type="InterPro" id="IPR013137">
    <property type="entry name" value="Znf_TFIIB"/>
</dbReference>
<dbReference type="PANTHER" id="PTHR11618:SF5">
    <property type="entry name" value="TRANSCRIPTION FACTOR IIIB 50 KDA SUBUNIT"/>
    <property type="match status" value="1"/>
</dbReference>
<dbReference type="PANTHER" id="PTHR11618">
    <property type="entry name" value="TRANSCRIPTION INITIATION FACTOR IIB-RELATED"/>
    <property type="match status" value="1"/>
</dbReference>
<dbReference type="Pfam" id="PF21886">
    <property type="entry name" value="BRF2-like_C_cyclin_rpt"/>
    <property type="match status" value="1"/>
</dbReference>
<dbReference type="Pfam" id="PF08271">
    <property type="entry name" value="Zn_Ribbon_TF"/>
    <property type="match status" value="1"/>
</dbReference>
<dbReference type="SUPFAM" id="SSF47954">
    <property type="entry name" value="Cyclin-like"/>
    <property type="match status" value="2"/>
</dbReference>
<dbReference type="SUPFAM" id="SSF57783">
    <property type="entry name" value="Zinc beta-ribbon"/>
    <property type="match status" value="1"/>
</dbReference>
<dbReference type="PROSITE" id="PS51134">
    <property type="entry name" value="ZF_TFIIB"/>
    <property type="match status" value="1"/>
</dbReference>
<accession>Q66IW8</accession>
<gene>
    <name type="primary">brf2</name>
</gene>
<keyword id="KW-0010">Activator</keyword>
<keyword id="KW-0479">Metal-binding</keyword>
<keyword id="KW-0539">Nucleus</keyword>
<keyword id="KW-0558">Oxidation</keyword>
<keyword id="KW-1185">Reference proteome</keyword>
<keyword id="KW-0677">Repeat</keyword>
<keyword id="KW-0804">Transcription</keyword>
<keyword id="KW-0805">Transcription regulation</keyword>
<keyword id="KW-0862">Zinc</keyword>
<keyword id="KW-0863">Zinc-finger</keyword>
<name>BRF2_XENLA</name>
<comment type="function">
    <text evidence="1">General activator of RNA polymerase III transcription. Factor exclusively required for RNA polymerase III transcription of genes with promoter elements upstream of the initiation sites. Contributes to the regulation of gene expression; functions as activator in the absence of oxidative stress. Down-regulates expression of target genes in response to oxidative stress. Overexpression protects cells against apoptosis in response to oxidative stress.</text>
</comment>
<comment type="subunit">
    <text evidence="1">Component of TFIIIB complexes. Interacts with TBP and forms a ternary complex with TBp and target DNA sequences.</text>
</comment>
<comment type="subcellular location">
    <subcellularLocation>
        <location evidence="1">Nucleus</location>
    </subcellularLocation>
</comment>
<comment type="PTM">
    <text evidence="1">In response to oxidative stress, a Cys-residue is reversibly oxidized to cysteine sulfenic acid. This impairs formation of a ternary complex with TBP and DNA and down-regulates expression of target genes in response to oxidative stress.</text>
</comment>
<comment type="similarity">
    <text evidence="3">Belongs to the TFIIB family.</text>
</comment>
<evidence type="ECO:0000250" key="1">
    <source>
        <dbReference type="UniProtKB" id="Q9HAW0"/>
    </source>
</evidence>
<evidence type="ECO:0000255" key="2">
    <source>
        <dbReference type="PROSITE-ProRule" id="PRU00469"/>
    </source>
</evidence>
<evidence type="ECO:0000305" key="3"/>
<proteinExistence type="evidence at transcript level"/>
<reference key="1">
    <citation type="submission" date="2004-08" db="EMBL/GenBank/DDBJ databases">
        <authorList>
            <consortium name="NIH - Xenopus Gene Collection (XGC) project"/>
        </authorList>
    </citation>
    <scope>NUCLEOTIDE SEQUENCE [LARGE SCALE MRNA]</scope>
    <source>
        <tissue>Brain</tissue>
    </source>
</reference>
<organism>
    <name type="scientific">Xenopus laevis</name>
    <name type="common">African clawed frog</name>
    <dbReference type="NCBI Taxonomy" id="8355"/>
    <lineage>
        <taxon>Eukaryota</taxon>
        <taxon>Metazoa</taxon>
        <taxon>Chordata</taxon>
        <taxon>Craniata</taxon>
        <taxon>Vertebrata</taxon>
        <taxon>Euteleostomi</taxon>
        <taxon>Amphibia</taxon>
        <taxon>Batrachia</taxon>
        <taxon>Anura</taxon>
        <taxon>Pipoidea</taxon>
        <taxon>Pipidae</taxon>
        <taxon>Xenopodinae</taxon>
        <taxon>Xenopus</taxon>
        <taxon>Xenopus</taxon>
    </lineage>
</organism>
<protein>
    <recommendedName>
        <fullName>Transcription factor IIIB 50 kDa subunit</fullName>
    </recommendedName>
    <alternativeName>
        <fullName>B-related factor 2</fullName>
        <shortName>BRF-2</shortName>
    </alternativeName>
</protein>
<feature type="chain" id="PRO_0000337192" description="Transcription factor IIIB 50 kDa subunit">
    <location>
        <begin position="1"/>
        <end position="396"/>
    </location>
</feature>
<feature type="repeat" description="2">
    <location>
        <begin position="173"/>
        <end position="249"/>
    </location>
</feature>
<feature type="zinc finger region" description="TFIIB-type" evidence="2">
    <location>
        <begin position="3"/>
        <end position="36"/>
    </location>
</feature>
<feature type="binding site" evidence="2">
    <location>
        <position position="7"/>
    </location>
    <ligand>
        <name>Zn(2+)</name>
        <dbReference type="ChEBI" id="CHEBI:29105"/>
    </ligand>
</feature>
<feature type="binding site" evidence="2">
    <location>
        <position position="10"/>
    </location>
    <ligand>
        <name>Zn(2+)</name>
        <dbReference type="ChEBI" id="CHEBI:29105"/>
    </ligand>
</feature>
<feature type="binding site" evidence="2">
    <location>
        <position position="28"/>
    </location>
    <ligand>
        <name>Zn(2+)</name>
        <dbReference type="ChEBI" id="CHEBI:29105"/>
    </ligand>
</feature>
<feature type="binding site" evidence="2">
    <location>
        <position position="31"/>
    </location>
    <ligand>
        <name>Zn(2+)</name>
        <dbReference type="ChEBI" id="CHEBI:29105"/>
    </ligand>
</feature>
<feature type="modified residue" description="Cysteine sulfenic acid (-SOH)" evidence="1">
    <location>
        <position position="342"/>
    </location>
</feature>
<sequence length="396" mass="44430">MSGAKRCPDCGSSEIVEDAHYSQDQLVCADCGCILSEGLITTTVSEETSLQAVRYSDSTGENDSVTYCMKRGIIRVRDLCRVLRLPDGFVDTALSYYKQAVGLPLYRLVSIEKKEIIVGCCVYITCRQQQWPITMGTICSLIYAKKELFASLFMDIVQVLKVDVPSISLQNLVKSHCRSFKLFKDSSEVPPQYAEKLDTVSERTVQTVELAYETWLVTGRHPIPMITAAAYISWQSFQPSRRLSCSLSRFCKLSDVDMPPPSTIRLKELQETLIKLAYHLPWLKILSLNRKNIVQHLGDLLKHRALLLRRALAVTEAELSKGTEASSSTDQLNSTLVFLPPCVSNPKKRSRSIAFPCGDLDITGDEEISDSEIEQYLRTPAEMKDYQQVQSCISSV</sequence>